<keyword id="KW-0143">Chaperone</keyword>
<keyword id="KW-0963">Cytoplasm</keyword>
<keyword id="KW-0235">DNA replication</keyword>
<keyword id="KW-0479">Metal-binding</keyword>
<keyword id="KW-1185">Reference proteome</keyword>
<keyword id="KW-0677">Repeat</keyword>
<keyword id="KW-0346">Stress response</keyword>
<keyword id="KW-0862">Zinc</keyword>
<keyword id="KW-0863">Zinc-finger</keyword>
<comment type="function">
    <text evidence="1">Participates actively in the response to hyperosmotic and heat shock by preventing the aggregation of stress-denatured proteins and by disaggregating proteins, also in an autonomous, DnaK-independent fashion. Unfolded proteins bind initially to DnaJ; upon interaction with the DnaJ-bound protein, DnaK hydrolyzes its bound ATP, resulting in the formation of a stable complex. GrpE releases ADP from DnaK; ATP binding to DnaK triggers the release of the substrate protein, thus completing the reaction cycle. Several rounds of ATP-dependent interactions between DnaJ, DnaK and GrpE are required for fully efficient folding. Also involved, together with DnaK and GrpE, in the DNA replication of plasmids through activation of initiation proteins.</text>
</comment>
<comment type="cofactor">
    <cofactor evidence="1">
        <name>Zn(2+)</name>
        <dbReference type="ChEBI" id="CHEBI:29105"/>
    </cofactor>
    <text evidence="1">Binds 2 Zn(2+) ions per monomer.</text>
</comment>
<comment type="subunit">
    <text evidence="1">Homodimer.</text>
</comment>
<comment type="subcellular location">
    <subcellularLocation>
        <location evidence="1">Cytoplasm</location>
    </subcellularLocation>
</comment>
<comment type="domain">
    <text evidence="1">The J domain is necessary and sufficient to stimulate DnaK ATPase activity. Zinc center 1 plays an important role in the autonomous, DnaK-independent chaperone activity of DnaJ. Zinc center 2 is essential for interaction with DnaK and for DnaJ activity.</text>
</comment>
<comment type="similarity">
    <text evidence="1">Belongs to the DnaJ family.</text>
</comment>
<organism>
    <name type="scientific">Shewanella pealeana (strain ATCC 700345 / ANG-SQ1)</name>
    <dbReference type="NCBI Taxonomy" id="398579"/>
    <lineage>
        <taxon>Bacteria</taxon>
        <taxon>Pseudomonadati</taxon>
        <taxon>Pseudomonadota</taxon>
        <taxon>Gammaproteobacteria</taxon>
        <taxon>Alteromonadales</taxon>
        <taxon>Shewanellaceae</taxon>
        <taxon>Shewanella</taxon>
    </lineage>
</organism>
<accession>A8H759</accession>
<protein>
    <recommendedName>
        <fullName evidence="1">Chaperone protein DnaJ</fullName>
    </recommendedName>
</protein>
<name>DNAJ_SHEPA</name>
<evidence type="ECO:0000255" key="1">
    <source>
        <dbReference type="HAMAP-Rule" id="MF_01152"/>
    </source>
</evidence>
<gene>
    <name evidence="1" type="primary">dnaJ</name>
    <name type="ordered locus">Spea_3079</name>
</gene>
<feature type="chain" id="PRO_1000085294" description="Chaperone protein DnaJ">
    <location>
        <begin position="1"/>
        <end position="376"/>
    </location>
</feature>
<feature type="domain" description="J" evidence="1">
    <location>
        <begin position="5"/>
        <end position="70"/>
    </location>
</feature>
<feature type="repeat" description="CXXCXGXG motif">
    <location>
        <begin position="145"/>
        <end position="152"/>
    </location>
</feature>
<feature type="repeat" description="CXXCXGXG motif">
    <location>
        <begin position="162"/>
        <end position="169"/>
    </location>
</feature>
<feature type="repeat" description="CXXCXGXG motif">
    <location>
        <begin position="184"/>
        <end position="191"/>
    </location>
</feature>
<feature type="repeat" description="CXXCXGXG motif">
    <location>
        <begin position="198"/>
        <end position="205"/>
    </location>
</feature>
<feature type="zinc finger region" description="CR-type" evidence="1">
    <location>
        <begin position="132"/>
        <end position="210"/>
    </location>
</feature>
<feature type="binding site" evidence="1">
    <location>
        <position position="145"/>
    </location>
    <ligand>
        <name>Zn(2+)</name>
        <dbReference type="ChEBI" id="CHEBI:29105"/>
        <label>1</label>
    </ligand>
</feature>
<feature type="binding site" evidence="1">
    <location>
        <position position="148"/>
    </location>
    <ligand>
        <name>Zn(2+)</name>
        <dbReference type="ChEBI" id="CHEBI:29105"/>
        <label>1</label>
    </ligand>
</feature>
<feature type="binding site" evidence="1">
    <location>
        <position position="162"/>
    </location>
    <ligand>
        <name>Zn(2+)</name>
        <dbReference type="ChEBI" id="CHEBI:29105"/>
        <label>2</label>
    </ligand>
</feature>
<feature type="binding site" evidence="1">
    <location>
        <position position="165"/>
    </location>
    <ligand>
        <name>Zn(2+)</name>
        <dbReference type="ChEBI" id="CHEBI:29105"/>
        <label>2</label>
    </ligand>
</feature>
<feature type="binding site" evidence="1">
    <location>
        <position position="184"/>
    </location>
    <ligand>
        <name>Zn(2+)</name>
        <dbReference type="ChEBI" id="CHEBI:29105"/>
        <label>2</label>
    </ligand>
</feature>
<feature type="binding site" evidence="1">
    <location>
        <position position="187"/>
    </location>
    <ligand>
        <name>Zn(2+)</name>
        <dbReference type="ChEBI" id="CHEBI:29105"/>
        <label>2</label>
    </ligand>
</feature>
<feature type="binding site" evidence="1">
    <location>
        <position position="198"/>
    </location>
    <ligand>
        <name>Zn(2+)</name>
        <dbReference type="ChEBI" id="CHEBI:29105"/>
        <label>1</label>
    </ligand>
</feature>
<feature type="binding site" evidence="1">
    <location>
        <position position="201"/>
    </location>
    <ligand>
        <name>Zn(2+)</name>
        <dbReference type="ChEBI" id="CHEBI:29105"/>
        <label>1</label>
    </ligand>
</feature>
<dbReference type="EMBL" id="CP000851">
    <property type="protein sequence ID" value="ABV88396.1"/>
    <property type="molecule type" value="Genomic_DNA"/>
</dbReference>
<dbReference type="RefSeq" id="WP_012156300.1">
    <property type="nucleotide sequence ID" value="NC_009901.1"/>
</dbReference>
<dbReference type="SMR" id="A8H759"/>
<dbReference type="STRING" id="398579.Spea_3079"/>
<dbReference type="KEGG" id="spl:Spea_3079"/>
<dbReference type="eggNOG" id="COG0484">
    <property type="taxonomic scope" value="Bacteria"/>
</dbReference>
<dbReference type="HOGENOM" id="CLU_017633_0_7_6"/>
<dbReference type="OrthoDB" id="9779889at2"/>
<dbReference type="Proteomes" id="UP000002608">
    <property type="component" value="Chromosome"/>
</dbReference>
<dbReference type="GO" id="GO:0005737">
    <property type="term" value="C:cytoplasm"/>
    <property type="evidence" value="ECO:0007669"/>
    <property type="project" value="UniProtKB-SubCell"/>
</dbReference>
<dbReference type="GO" id="GO:0005524">
    <property type="term" value="F:ATP binding"/>
    <property type="evidence" value="ECO:0007669"/>
    <property type="project" value="InterPro"/>
</dbReference>
<dbReference type="GO" id="GO:0031072">
    <property type="term" value="F:heat shock protein binding"/>
    <property type="evidence" value="ECO:0007669"/>
    <property type="project" value="InterPro"/>
</dbReference>
<dbReference type="GO" id="GO:0051082">
    <property type="term" value="F:unfolded protein binding"/>
    <property type="evidence" value="ECO:0007669"/>
    <property type="project" value="UniProtKB-UniRule"/>
</dbReference>
<dbReference type="GO" id="GO:0008270">
    <property type="term" value="F:zinc ion binding"/>
    <property type="evidence" value="ECO:0007669"/>
    <property type="project" value="UniProtKB-UniRule"/>
</dbReference>
<dbReference type="GO" id="GO:0051085">
    <property type="term" value="P:chaperone cofactor-dependent protein refolding"/>
    <property type="evidence" value="ECO:0007669"/>
    <property type="project" value="TreeGrafter"/>
</dbReference>
<dbReference type="GO" id="GO:0006260">
    <property type="term" value="P:DNA replication"/>
    <property type="evidence" value="ECO:0007669"/>
    <property type="project" value="UniProtKB-KW"/>
</dbReference>
<dbReference type="GO" id="GO:0042026">
    <property type="term" value="P:protein refolding"/>
    <property type="evidence" value="ECO:0007669"/>
    <property type="project" value="TreeGrafter"/>
</dbReference>
<dbReference type="GO" id="GO:0009408">
    <property type="term" value="P:response to heat"/>
    <property type="evidence" value="ECO:0007669"/>
    <property type="project" value="InterPro"/>
</dbReference>
<dbReference type="CDD" id="cd06257">
    <property type="entry name" value="DnaJ"/>
    <property type="match status" value="1"/>
</dbReference>
<dbReference type="CDD" id="cd10747">
    <property type="entry name" value="DnaJ_C"/>
    <property type="match status" value="1"/>
</dbReference>
<dbReference type="CDD" id="cd10719">
    <property type="entry name" value="DnaJ_zf"/>
    <property type="match status" value="1"/>
</dbReference>
<dbReference type="FunFam" id="1.10.287.110:FF:000003">
    <property type="entry name" value="Molecular chaperone DnaJ"/>
    <property type="match status" value="1"/>
</dbReference>
<dbReference type="FunFam" id="2.10.230.10:FF:000002">
    <property type="entry name" value="Molecular chaperone DnaJ"/>
    <property type="match status" value="1"/>
</dbReference>
<dbReference type="FunFam" id="2.60.260.20:FF:000004">
    <property type="entry name" value="Molecular chaperone DnaJ"/>
    <property type="match status" value="1"/>
</dbReference>
<dbReference type="Gene3D" id="1.10.287.110">
    <property type="entry name" value="DnaJ domain"/>
    <property type="match status" value="1"/>
</dbReference>
<dbReference type="Gene3D" id="2.10.230.10">
    <property type="entry name" value="Heat shock protein DnaJ, cysteine-rich domain"/>
    <property type="match status" value="1"/>
</dbReference>
<dbReference type="Gene3D" id="2.60.260.20">
    <property type="entry name" value="Urease metallochaperone UreE, N-terminal domain"/>
    <property type="match status" value="2"/>
</dbReference>
<dbReference type="HAMAP" id="MF_01152">
    <property type="entry name" value="DnaJ"/>
    <property type="match status" value="1"/>
</dbReference>
<dbReference type="InterPro" id="IPR012724">
    <property type="entry name" value="DnaJ"/>
</dbReference>
<dbReference type="InterPro" id="IPR002939">
    <property type="entry name" value="DnaJ_C"/>
</dbReference>
<dbReference type="InterPro" id="IPR001623">
    <property type="entry name" value="DnaJ_domain"/>
</dbReference>
<dbReference type="InterPro" id="IPR018253">
    <property type="entry name" value="DnaJ_domain_CS"/>
</dbReference>
<dbReference type="InterPro" id="IPR008971">
    <property type="entry name" value="HSP40/DnaJ_pept-bd"/>
</dbReference>
<dbReference type="InterPro" id="IPR001305">
    <property type="entry name" value="HSP_DnaJ_Cys-rich_dom"/>
</dbReference>
<dbReference type="InterPro" id="IPR036410">
    <property type="entry name" value="HSP_DnaJ_Cys-rich_dom_sf"/>
</dbReference>
<dbReference type="InterPro" id="IPR036869">
    <property type="entry name" value="J_dom_sf"/>
</dbReference>
<dbReference type="NCBIfam" id="TIGR02349">
    <property type="entry name" value="DnaJ_bact"/>
    <property type="match status" value="1"/>
</dbReference>
<dbReference type="NCBIfam" id="NF008035">
    <property type="entry name" value="PRK10767.1"/>
    <property type="match status" value="1"/>
</dbReference>
<dbReference type="PANTHER" id="PTHR43096:SF48">
    <property type="entry name" value="CHAPERONE PROTEIN DNAJ"/>
    <property type="match status" value="1"/>
</dbReference>
<dbReference type="PANTHER" id="PTHR43096">
    <property type="entry name" value="DNAJ HOMOLOG 1, MITOCHONDRIAL-RELATED"/>
    <property type="match status" value="1"/>
</dbReference>
<dbReference type="Pfam" id="PF00226">
    <property type="entry name" value="DnaJ"/>
    <property type="match status" value="1"/>
</dbReference>
<dbReference type="Pfam" id="PF01556">
    <property type="entry name" value="DnaJ_C"/>
    <property type="match status" value="1"/>
</dbReference>
<dbReference type="Pfam" id="PF00684">
    <property type="entry name" value="DnaJ_CXXCXGXG"/>
    <property type="match status" value="1"/>
</dbReference>
<dbReference type="PRINTS" id="PR00625">
    <property type="entry name" value="JDOMAIN"/>
</dbReference>
<dbReference type="SMART" id="SM00271">
    <property type="entry name" value="DnaJ"/>
    <property type="match status" value="1"/>
</dbReference>
<dbReference type="SUPFAM" id="SSF46565">
    <property type="entry name" value="Chaperone J-domain"/>
    <property type="match status" value="1"/>
</dbReference>
<dbReference type="SUPFAM" id="SSF57938">
    <property type="entry name" value="DnaJ/Hsp40 cysteine-rich domain"/>
    <property type="match status" value="1"/>
</dbReference>
<dbReference type="SUPFAM" id="SSF49493">
    <property type="entry name" value="HSP40/DnaJ peptide-binding domain"/>
    <property type="match status" value="2"/>
</dbReference>
<dbReference type="PROSITE" id="PS00636">
    <property type="entry name" value="DNAJ_1"/>
    <property type="match status" value="1"/>
</dbReference>
<dbReference type="PROSITE" id="PS50076">
    <property type="entry name" value="DNAJ_2"/>
    <property type="match status" value="1"/>
</dbReference>
<dbReference type="PROSITE" id="PS51188">
    <property type="entry name" value="ZF_CR"/>
    <property type="match status" value="1"/>
</dbReference>
<reference key="1">
    <citation type="submission" date="2007-10" db="EMBL/GenBank/DDBJ databases">
        <title>Complete sequence of Shewanella pealeana ATCC 700345.</title>
        <authorList>
            <consortium name="US DOE Joint Genome Institute"/>
            <person name="Copeland A."/>
            <person name="Lucas S."/>
            <person name="Lapidus A."/>
            <person name="Barry K."/>
            <person name="Glavina del Rio T."/>
            <person name="Dalin E."/>
            <person name="Tice H."/>
            <person name="Pitluck S."/>
            <person name="Chertkov O."/>
            <person name="Brettin T."/>
            <person name="Bruce D."/>
            <person name="Detter J.C."/>
            <person name="Han C."/>
            <person name="Schmutz J."/>
            <person name="Larimer F."/>
            <person name="Land M."/>
            <person name="Hauser L."/>
            <person name="Kyrpides N."/>
            <person name="Kim E."/>
            <person name="Zhao J.-S.Z."/>
            <person name="Manno D."/>
            <person name="Hawari J."/>
            <person name="Richardson P."/>
        </authorList>
    </citation>
    <scope>NUCLEOTIDE SEQUENCE [LARGE SCALE GENOMIC DNA]</scope>
    <source>
        <strain>ATCC 700345 / ANG-SQ1</strain>
    </source>
</reference>
<sequence length="376" mass="40927">MSKRDYYEVLGVGRDTSEREIKKAYKRLAMKFHPDRNPGDKEAEANFKEVKEAYEILTDSDKKAAYDQFGHAGVDPNRGGGGYGGSADFGDVFGDVFGDIFGGGRRGGQRQAARGSDLRYNLELSLEEAVRGLTKELRIPTLAACDSCDGSGAKKGSSPTTCGTCHGQGQVQMRQGFFAVQQACPTCHGRGKIIKDPCNKCHGEGRVEKSKTLSVKIPAGVDTGDRIRLSGEGEAGEYGAPPGDLYVQVSVREHAIFQRDGNNLYCEVPISFSKAALGGEIEVPTLDGKVNLKIPAETQTGRMFRMRGKGVKSVRSHAVGDLLCKVVMETPVNLNERQKELLREFEDTLTGQSKKHSPKAEGFFDGVKKFFQDLNS</sequence>
<proteinExistence type="inferred from homology"/>